<comment type="function">
    <text evidence="2">Component of the cytochrome c oxidase, the last enzyme in the mitochondrial electron transport chain which drives oxidative phosphorylation. The respiratory chain contains 3 multisubunit complexes succinate dehydrogenase (complex II, CII), ubiquinol-cytochrome c oxidoreductase (cytochrome b-c1 complex, complex III, CIII) and cytochrome c oxidase (complex IV, CIV), that cooperate to transfer electrons derived from NADH and succinate to molecular oxygen, creating an electrochemical gradient over the inner membrane that drives transmembrane transport and the ATP synthase. Cytochrome c oxidase is the component of the respiratory chain that catalyzes the reduction of oxygen to water. Electrons originating from reduced cytochrome c in the intermembrane space (IMS) are transferred via the dinuclear copper A center (CU(A)) of subunit 2 and heme A of subunit 1 to the active site in subunit 1, a binuclear center (BNC) formed by heme A3 and copper B (CU(B)). The BNC reduces molecular oxygen to 2 water molecules using 4 electrons from cytochrome c in the IMS and 4 protons from the mitochondrial matrix.</text>
</comment>
<comment type="pathway">
    <text evidence="2">Energy metabolism; oxidative phosphorylation.</text>
</comment>
<comment type="subunit">
    <text evidence="1">Component of the cytochrome c oxidase (complex IV, CIV), a multisubunit enzyme composed of 14 subunits. The complex is composed of a catalytic core of 3 subunits MT-CO1, MT-CO2 and MT-CO3, encoded in the mitochondrial DNA, and 11 supernumerary subunits COX4I, COX5A, COX5B, COX6A, COX6B, COX6C, COX7A, COX7B, COX7C, COX8 and NDUFA4, which are encoded in the nuclear genome. The complex exists as a monomer or a dimer and forms supercomplexes (SCs) in the inner mitochondrial membrane with NADH-ubiquinone oxidoreductase (complex I, CI) and ubiquinol-cytochrome c oxidoreductase (cytochrome b-c1 complex, complex III, CIII), resulting in different assemblies (supercomplex SCI(1)III(2)IV(1) and megacomplex MCI(2)III(2)IV(2)).</text>
</comment>
<comment type="subcellular location">
    <subcellularLocation>
        <location evidence="1">Mitochondrion inner membrane</location>
        <topology evidence="1">Peripheral membrane protein</topology>
        <orientation evidence="1">Matrix side</orientation>
    </subcellularLocation>
</comment>
<comment type="similarity">
    <text evidence="6">Belongs to the cytochrome c oxidase subunit 5B family.</text>
</comment>
<name>COX5B_RAT</name>
<gene>
    <name type="primary">Cox5b</name>
</gene>
<keyword id="KW-0007">Acetylation</keyword>
<keyword id="KW-0903">Direct protein sequencing</keyword>
<keyword id="KW-0472">Membrane</keyword>
<keyword id="KW-0479">Metal-binding</keyword>
<keyword id="KW-0496">Mitochondrion</keyword>
<keyword id="KW-0999">Mitochondrion inner membrane</keyword>
<keyword id="KW-1185">Reference proteome</keyword>
<keyword id="KW-0809">Transit peptide</keyword>
<keyword id="KW-0862">Zinc</keyword>
<accession>P12075</accession>
<sequence>MASRLLRGVGALAAQALRAHGPRGVAATRSMASGGGVPTDEEQATGLEREIMIAAQRGLDPYNMLPPKAASGTKEDPNLVPSVSNKRIVGCICEEDNCTVIWFWLHQGESQRCPNCGTHYKLVPYQMVH</sequence>
<reference key="1">
    <citation type="journal article" date="1994" name="J. Biochem.">
        <title>Molecular cloning and characterization of the rat cytochrome c oxidase subunit Vb gene.</title>
        <authorList>
            <person name="Hoshinaga H."/>
            <person name="Amuro N."/>
            <person name="Goto Y."/>
            <person name="Okazaki T."/>
        </authorList>
    </citation>
    <scope>NUCLEOTIDE SEQUENCE [GENOMIC DNA / MRNA]</scope>
    <source>
        <strain>Sprague-Dawley</strain>
        <tissue>Liver</tissue>
    </source>
</reference>
<reference key="2">
    <citation type="journal article" date="2004" name="Genome Res.">
        <title>The status, quality, and expansion of the NIH full-length cDNA project: the Mammalian Gene Collection (MGC).</title>
        <authorList>
            <consortium name="The MGC Project Team"/>
        </authorList>
    </citation>
    <scope>NUCLEOTIDE SEQUENCE [LARGE SCALE MRNA]</scope>
    <source>
        <tissue>Ovary</tissue>
    </source>
</reference>
<reference key="3">
    <citation type="journal article" date="1989" name="Nucleic Acids Res.">
        <title>Nucleotide sequence of cDNA for rat liver and brain cytochrome c oxidase subunit VIa (Vb).</title>
        <authorList>
            <person name="Goto Y."/>
            <person name="Amuro N."/>
            <person name="Okazaki T."/>
        </authorList>
    </citation>
    <scope>NUCLEOTIDE SEQUENCE [MRNA] OF 13-129</scope>
    <source>
        <strain>Sprague-Dawley</strain>
        <tissue>Brain</tissue>
    </source>
</reference>
<reference key="4">
    <citation type="journal article" date="1995" name="Eur. J. Biochem.">
        <title>Cytochrome-c oxidase in developing rat heart. Enzymic properties and amino-terminal sequences suggest identity of the fetal heart and the adult liver isoform.</title>
        <authorList>
            <person name="Schaegger H."/>
            <person name="Noack H."/>
            <person name="Halangk W."/>
            <person name="Brandt U."/>
            <person name="von Jagow G."/>
        </authorList>
    </citation>
    <scope>PROTEIN SEQUENCE OF 32-41</scope>
    <source>
        <strain>Wistar</strain>
        <tissue>Liver</tissue>
    </source>
</reference>
<reference key="5">
    <citation type="submission" date="2007-04" db="UniProtKB">
        <authorList>
            <person name="Lubec G."/>
            <person name="Chen W.-Q."/>
        </authorList>
    </citation>
    <scope>PROTEIN SEQUENCE OF 50-57; 69-87 AND 113-121</scope>
    <scope>IDENTIFICATION BY MASS SPECTROMETRY</scope>
    <source>
        <strain>Sprague-Dawley</strain>
        <tissue>Hippocampus</tissue>
    </source>
</reference>
<dbReference type="EMBL" id="D10952">
    <property type="protein sequence ID" value="BAA01744.1"/>
    <property type="molecule type" value="mRNA"/>
</dbReference>
<dbReference type="EMBL" id="D10951">
    <property type="protein sequence ID" value="BAA01743.1"/>
    <property type="molecule type" value="Genomic_DNA"/>
</dbReference>
<dbReference type="EMBL" id="BC083179">
    <property type="protein sequence ID" value="AAH83179.1"/>
    <property type="molecule type" value="mRNA"/>
</dbReference>
<dbReference type="EMBL" id="X14208">
    <property type="protein sequence ID" value="CAA32425.1"/>
    <property type="molecule type" value="mRNA"/>
</dbReference>
<dbReference type="PIR" id="JC2254">
    <property type="entry name" value="JC2254"/>
</dbReference>
<dbReference type="RefSeq" id="NP_446038.1">
    <property type="nucleotide sequence ID" value="NM_053586.2"/>
</dbReference>
<dbReference type="SMR" id="P12075"/>
<dbReference type="BioGRID" id="250174">
    <property type="interactions" value="4"/>
</dbReference>
<dbReference type="CORUM" id="P12075"/>
<dbReference type="FunCoup" id="P12075">
    <property type="interactions" value="2107"/>
</dbReference>
<dbReference type="IntAct" id="P12075">
    <property type="interactions" value="1"/>
</dbReference>
<dbReference type="MINT" id="P12075"/>
<dbReference type="STRING" id="10116.ENSRNOP00000022487"/>
<dbReference type="CarbonylDB" id="P12075"/>
<dbReference type="iPTMnet" id="P12075"/>
<dbReference type="PhosphoSitePlus" id="P12075"/>
<dbReference type="SwissPalm" id="P12075"/>
<dbReference type="jPOST" id="P12075"/>
<dbReference type="PaxDb" id="10116-ENSRNOP00000022487"/>
<dbReference type="GeneID" id="94194"/>
<dbReference type="KEGG" id="rno:94194"/>
<dbReference type="UCSC" id="RGD:620608">
    <property type="organism name" value="rat"/>
</dbReference>
<dbReference type="AGR" id="RGD:620608"/>
<dbReference type="CTD" id="1329"/>
<dbReference type="RGD" id="620608">
    <property type="gene designation" value="Cox5b"/>
</dbReference>
<dbReference type="VEuPathDB" id="HostDB:ENSRNOG00000016660"/>
<dbReference type="eggNOG" id="KOG3352">
    <property type="taxonomic scope" value="Eukaryota"/>
</dbReference>
<dbReference type="HOGENOM" id="CLU_127178_0_0_1"/>
<dbReference type="InParanoid" id="P12075"/>
<dbReference type="OrthoDB" id="38169at9989"/>
<dbReference type="PhylomeDB" id="P12075"/>
<dbReference type="TreeFam" id="TF105063"/>
<dbReference type="Reactome" id="R-RNO-5628897">
    <property type="pathway name" value="TP53 Regulates Metabolic Genes"/>
</dbReference>
<dbReference type="Reactome" id="R-RNO-611105">
    <property type="pathway name" value="Respiratory electron transport"/>
</dbReference>
<dbReference type="Reactome" id="R-RNO-9707564">
    <property type="pathway name" value="Cytoprotection by HMOX1"/>
</dbReference>
<dbReference type="Reactome" id="R-RNO-9837999">
    <property type="pathway name" value="Mitochondrial protein degradation"/>
</dbReference>
<dbReference type="UniPathway" id="UPA00705"/>
<dbReference type="PRO" id="PR:P12075"/>
<dbReference type="Proteomes" id="UP000002494">
    <property type="component" value="Chromosome 9"/>
</dbReference>
<dbReference type="Bgee" id="ENSRNOG00000016660">
    <property type="expression patterns" value="Expressed in heart and 20 other cell types or tissues"/>
</dbReference>
<dbReference type="GO" id="GO:0005743">
    <property type="term" value="C:mitochondrial inner membrane"/>
    <property type="evidence" value="ECO:0000266"/>
    <property type="project" value="RGD"/>
</dbReference>
<dbReference type="GO" id="GO:0031966">
    <property type="term" value="C:mitochondrial membrane"/>
    <property type="evidence" value="ECO:0000266"/>
    <property type="project" value="RGD"/>
</dbReference>
<dbReference type="GO" id="GO:0005739">
    <property type="term" value="C:mitochondrion"/>
    <property type="evidence" value="ECO:0000266"/>
    <property type="project" value="RGD"/>
</dbReference>
<dbReference type="GO" id="GO:0045277">
    <property type="term" value="C:respiratory chain complex IV"/>
    <property type="evidence" value="ECO:0000266"/>
    <property type="project" value="RGD"/>
</dbReference>
<dbReference type="GO" id="GO:0004129">
    <property type="term" value="F:cytochrome-c oxidase activity"/>
    <property type="evidence" value="ECO:0000304"/>
    <property type="project" value="RGD"/>
</dbReference>
<dbReference type="GO" id="GO:0046872">
    <property type="term" value="F:metal ion binding"/>
    <property type="evidence" value="ECO:0007669"/>
    <property type="project" value="UniProtKB-KW"/>
</dbReference>
<dbReference type="GO" id="GO:0006123">
    <property type="term" value="P:mitochondrial electron transport, cytochrome c to oxygen"/>
    <property type="evidence" value="ECO:0000318"/>
    <property type="project" value="GO_Central"/>
</dbReference>
<dbReference type="GO" id="GO:0043434">
    <property type="term" value="P:response to peptide hormone"/>
    <property type="evidence" value="ECO:0000270"/>
    <property type="project" value="RGD"/>
</dbReference>
<dbReference type="GO" id="GO:0097066">
    <property type="term" value="P:response to thyroid hormone"/>
    <property type="evidence" value="ECO:0000270"/>
    <property type="project" value="RGD"/>
</dbReference>
<dbReference type="CDD" id="cd00924">
    <property type="entry name" value="Cyt_c_Oxidase_Vb"/>
    <property type="match status" value="1"/>
</dbReference>
<dbReference type="FunFam" id="2.60.11.10:FF:000001">
    <property type="entry name" value="Cytochrome c oxidase subunit 5B, mitochondrial"/>
    <property type="match status" value="1"/>
</dbReference>
<dbReference type="Gene3D" id="2.60.11.10">
    <property type="entry name" value="Cytochrome c oxidase, subunit Vb"/>
    <property type="match status" value="1"/>
</dbReference>
<dbReference type="InterPro" id="IPR002124">
    <property type="entry name" value="Cyt_c_oxidase_su5b"/>
</dbReference>
<dbReference type="InterPro" id="IPR036972">
    <property type="entry name" value="Cyt_c_oxidase_su5b_sf"/>
</dbReference>
<dbReference type="PANTHER" id="PTHR10122">
    <property type="entry name" value="CYTOCHROME C OXIDASE SUBUNIT 5B, MITOCHONDRIAL"/>
    <property type="match status" value="1"/>
</dbReference>
<dbReference type="PANTHER" id="PTHR10122:SF20">
    <property type="entry name" value="CYTOCHROME C OXIDASE SUBUNIT 5B, MITOCHONDRIAL"/>
    <property type="match status" value="1"/>
</dbReference>
<dbReference type="Pfam" id="PF01215">
    <property type="entry name" value="COX5B"/>
    <property type="match status" value="1"/>
</dbReference>
<dbReference type="SUPFAM" id="SSF57802">
    <property type="entry name" value="Rubredoxin-like"/>
    <property type="match status" value="1"/>
</dbReference>
<dbReference type="PROSITE" id="PS00848">
    <property type="entry name" value="COX5B_1"/>
    <property type="match status" value="1"/>
</dbReference>
<dbReference type="PROSITE" id="PS51359">
    <property type="entry name" value="COX5B_2"/>
    <property type="match status" value="1"/>
</dbReference>
<organism>
    <name type="scientific">Rattus norvegicus</name>
    <name type="common">Rat</name>
    <dbReference type="NCBI Taxonomy" id="10116"/>
    <lineage>
        <taxon>Eukaryota</taxon>
        <taxon>Metazoa</taxon>
        <taxon>Chordata</taxon>
        <taxon>Craniata</taxon>
        <taxon>Vertebrata</taxon>
        <taxon>Euteleostomi</taxon>
        <taxon>Mammalia</taxon>
        <taxon>Eutheria</taxon>
        <taxon>Euarchontoglires</taxon>
        <taxon>Glires</taxon>
        <taxon>Rodentia</taxon>
        <taxon>Myomorpha</taxon>
        <taxon>Muroidea</taxon>
        <taxon>Muridae</taxon>
        <taxon>Murinae</taxon>
        <taxon>Rattus</taxon>
    </lineage>
</organism>
<feature type="transit peptide" description="Mitochondrion" evidence="5">
    <location>
        <begin position="1"/>
        <end position="31"/>
    </location>
</feature>
<feature type="chain" id="PRO_0000006111" description="Cytochrome c oxidase subunit 5B, mitochondrial">
    <location>
        <begin position="32"/>
        <end position="129"/>
    </location>
</feature>
<feature type="binding site" evidence="4">
    <location>
        <position position="91"/>
    </location>
    <ligand>
        <name>Zn(2+)</name>
        <dbReference type="ChEBI" id="CHEBI:29105"/>
    </ligand>
</feature>
<feature type="binding site" evidence="4">
    <location>
        <position position="93"/>
    </location>
    <ligand>
        <name>Zn(2+)</name>
        <dbReference type="ChEBI" id="CHEBI:29105"/>
    </ligand>
</feature>
<feature type="binding site" evidence="4">
    <location>
        <position position="113"/>
    </location>
    <ligand>
        <name>Zn(2+)</name>
        <dbReference type="ChEBI" id="CHEBI:29105"/>
    </ligand>
</feature>
<feature type="binding site" evidence="4">
    <location>
        <position position="116"/>
    </location>
    <ligand>
        <name>Zn(2+)</name>
        <dbReference type="ChEBI" id="CHEBI:29105"/>
    </ligand>
</feature>
<feature type="modified residue" description="N6-acetyllysine" evidence="3">
    <location>
        <position position="68"/>
    </location>
</feature>
<feature type="modified residue" description="N6-acetyllysine" evidence="3">
    <location>
        <position position="86"/>
    </location>
</feature>
<feature type="modified residue" description="N6-acetyllysine" evidence="3">
    <location>
        <position position="121"/>
    </location>
</feature>
<feature type="sequence variant">
    <original>E</original>
    <variation>Q</variation>
    <location>
        <position position="109"/>
    </location>
</feature>
<proteinExistence type="evidence at protein level"/>
<evidence type="ECO:0000250" key="1">
    <source>
        <dbReference type="UniProtKB" id="P00428"/>
    </source>
</evidence>
<evidence type="ECO:0000250" key="2">
    <source>
        <dbReference type="UniProtKB" id="P04037"/>
    </source>
</evidence>
<evidence type="ECO:0000250" key="3">
    <source>
        <dbReference type="UniProtKB" id="P19536"/>
    </source>
</evidence>
<evidence type="ECO:0000255" key="4">
    <source>
        <dbReference type="PROSITE-ProRule" id="PRU00692"/>
    </source>
</evidence>
<evidence type="ECO:0000269" key="5">
    <source>
    </source>
</evidence>
<evidence type="ECO:0000305" key="6"/>
<protein>
    <recommendedName>
        <fullName>Cytochrome c oxidase subunit 5B, mitochondrial</fullName>
    </recommendedName>
    <alternativeName>
        <fullName>Cytochrome c oxidase polypeptide Vb</fullName>
    </alternativeName>
    <alternativeName>
        <fullName>Cytochrome c oxidase subunit VIA*</fullName>
    </alternativeName>
</protein>